<name>DNAA_BORHD</name>
<keyword id="KW-0067">ATP-binding</keyword>
<keyword id="KW-0963">Cytoplasm</keyword>
<keyword id="KW-0235">DNA replication</keyword>
<keyword id="KW-0238">DNA-binding</keyword>
<keyword id="KW-0446">Lipid-binding</keyword>
<keyword id="KW-0547">Nucleotide-binding</keyword>
<dbReference type="EMBL" id="CP000048">
    <property type="protein sequence ID" value="AAX16945.1"/>
    <property type="molecule type" value="Genomic_DNA"/>
</dbReference>
<dbReference type="RefSeq" id="WP_012422201.1">
    <property type="nucleotide sequence ID" value="NZ_CP073136.1"/>
</dbReference>
<dbReference type="SMR" id="B2S0D9"/>
<dbReference type="GeneID" id="71843248"/>
<dbReference type="KEGG" id="bhr:BH0437"/>
<dbReference type="HOGENOM" id="CLU_026910_3_1_12"/>
<dbReference type="Proteomes" id="UP000008834">
    <property type="component" value="Chromosome"/>
</dbReference>
<dbReference type="GO" id="GO:0005737">
    <property type="term" value="C:cytoplasm"/>
    <property type="evidence" value="ECO:0007669"/>
    <property type="project" value="UniProtKB-SubCell"/>
</dbReference>
<dbReference type="GO" id="GO:0005886">
    <property type="term" value="C:plasma membrane"/>
    <property type="evidence" value="ECO:0007669"/>
    <property type="project" value="TreeGrafter"/>
</dbReference>
<dbReference type="GO" id="GO:0005524">
    <property type="term" value="F:ATP binding"/>
    <property type="evidence" value="ECO:0007669"/>
    <property type="project" value="UniProtKB-UniRule"/>
</dbReference>
<dbReference type="GO" id="GO:0016887">
    <property type="term" value="F:ATP hydrolysis activity"/>
    <property type="evidence" value="ECO:0007669"/>
    <property type="project" value="InterPro"/>
</dbReference>
<dbReference type="GO" id="GO:0003688">
    <property type="term" value="F:DNA replication origin binding"/>
    <property type="evidence" value="ECO:0007669"/>
    <property type="project" value="UniProtKB-UniRule"/>
</dbReference>
<dbReference type="GO" id="GO:0008289">
    <property type="term" value="F:lipid binding"/>
    <property type="evidence" value="ECO:0007669"/>
    <property type="project" value="UniProtKB-KW"/>
</dbReference>
<dbReference type="GO" id="GO:0006270">
    <property type="term" value="P:DNA replication initiation"/>
    <property type="evidence" value="ECO:0007669"/>
    <property type="project" value="UniProtKB-UniRule"/>
</dbReference>
<dbReference type="GO" id="GO:0006275">
    <property type="term" value="P:regulation of DNA replication"/>
    <property type="evidence" value="ECO:0007669"/>
    <property type="project" value="UniProtKB-UniRule"/>
</dbReference>
<dbReference type="CDD" id="cd00009">
    <property type="entry name" value="AAA"/>
    <property type="match status" value="1"/>
</dbReference>
<dbReference type="CDD" id="cd06571">
    <property type="entry name" value="Bac_DnaA_C"/>
    <property type="match status" value="1"/>
</dbReference>
<dbReference type="FunFam" id="3.40.50.300:FF:000668">
    <property type="entry name" value="Chromosomal replication initiator protein DnaA"/>
    <property type="match status" value="1"/>
</dbReference>
<dbReference type="Gene3D" id="1.10.1750.10">
    <property type="match status" value="1"/>
</dbReference>
<dbReference type="Gene3D" id="1.10.8.60">
    <property type="match status" value="1"/>
</dbReference>
<dbReference type="Gene3D" id="3.30.300.180">
    <property type="match status" value="1"/>
</dbReference>
<dbReference type="Gene3D" id="3.40.50.300">
    <property type="entry name" value="P-loop containing nucleotide triphosphate hydrolases"/>
    <property type="match status" value="1"/>
</dbReference>
<dbReference type="HAMAP" id="MF_00377">
    <property type="entry name" value="DnaA_bact"/>
    <property type="match status" value="1"/>
</dbReference>
<dbReference type="InterPro" id="IPR003593">
    <property type="entry name" value="AAA+_ATPase"/>
</dbReference>
<dbReference type="InterPro" id="IPR001957">
    <property type="entry name" value="Chromosome_initiator_DnaA"/>
</dbReference>
<dbReference type="InterPro" id="IPR020591">
    <property type="entry name" value="Chromosome_initiator_DnaA-like"/>
</dbReference>
<dbReference type="InterPro" id="IPR018312">
    <property type="entry name" value="Chromosome_initiator_DnaA_CS"/>
</dbReference>
<dbReference type="InterPro" id="IPR013159">
    <property type="entry name" value="DnaA_C"/>
</dbReference>
<dbReference type="InterPro" id="IPR013317">
    <property type="entry name" value="DnaA_dom"/>
</dbReference>
<dbReference type="InterPro" id="IPR024633">
    <property type="entry name" value="DnaA_N_dom"/>
</dbReference>
<dbReference type="InterPro" id="IPR038454">
    <property type="entry name" value="DnaA_N_sf"/>
</dbReference>
<dbReference type="InterPro" id="IPR027417">
    <property type="entry name" value="P-loop_NTPase"/>
</dbReference>
<dbReference type="InterPro" id="IPR010921">
    <property type="entry name" value="Trp_repressor/repl_initiator"/>
</dbReference>
<dbReference type="NCBIfam" id="TIGR00362">
    <property type="entry name" value="DnaA"/>
    <property type="match status" value="1"/>
</dbReference>
<dbReference type="PANTHER" id="PTHR30050">
    <property type="entry name" value="CHROMOSOMAL REPLICATION INITIATOR PROTEIN DNAA"/>
    <property type="match status" value="1"/>
</dbReference>
<dbReference type="PANTHER" id="PTHR30050:SF2">
    <property type="entry name" value="CHROMOSOMAL REPLICATION INITIATOR PROTEIN DNAA"/>
    <property type="match status" value="1"/>
</dbReference>
<dbReference type="Pfam" id="PF00308">
    <property type="entry name" value="Bac_DnaA"/>
    <property type="match status" value="1"/>
</dbReference>
<dbReference type="Pfam" id="PF08299">
    <property type="entry name" value="Bac_DnaA_C"/>
    <property type="match status" value="1"/>
</dbReference>
<dbReference type="Pfam" id="PF11638">
    <property type="entry name" value="DnaA_N"/>
    <property type="match status" value="1"/>
</dbReference>
<dbReference type="PRINTS" id="PR00051">
    <property type="entry name" value="DNAA"/>
</dbReference>
<dbReference type="SMART" id="SM00382">
    <property type="entry name" value="AAA"/>
    <property type="match status" value="1"/>
</dbReference>
<dbReference type="SMART" id="SM00760">
    <property type="entry name" value="Bac_DnaA_C"/>
    <property type="match status" value="1"/>
</dbReference>
<dbReference type="SUPFAM" id="SSF52540">
    <property type="entry name" value="P-loop containing nucleoside triphosphate hydrolases"/>
    <property type="match status" value="1"/>
</dbReference>
<dbReference type="SUPFAM" id="SSF48295">
    <property type="entry name" value="TrpR-like"/>
    <property type="match status" value="1"/>
</dbReference>
<dbReference type="PROSITE" id="PS01008">
    <property type="entry name" value="DNAA"/>
    <property type="match status" value="1"/>
</dbReference>
<proteinExistence type="inferred from homology"/>
<reference key="1">
    <citation type="submission" date="2004-12" db="EMBL/GenBank/DDBJ databases">
        <title>The genome sequence of Borrelia hermsii and Borrelia turicatae: comparative analysis of two agents of endemic N. America relapsing fever.</title>
        <authorList>
            <person name="Porcella S.F."/>
            <person name="Raffel S.J."/>
            <person name="Schrumpf M.E."/>
            <person name="Montgomery B."/>
            <person name="Smith T."/>
            <person name="Schwan T.G."/>
        </authorList>
    </citation>
    <scope>NUCLEOTIDE SEQUENCE [LARGE SCALE GENOMIC DNA]</scope>
    <source>
        <strain>HS1 / DAH</strain>
    </source>
</reference>
<protein>
    <recommendedName>
        <fullName evidence="1">Chromosomal replication initiator protein DnaA</fullName>
    </recommendedName>
</protein>
<organism>
    <name type="scientific">Borrelia hermsii (strain HS1 / DAH)</name>
    <dbReference type="NCBI Taxonomy" id="314723"/>
    <lineage>
        <taxon>Bacteria</taxon>
        <taxon>Pseudomonadati</taxon>
        <taxon>Spirochaetota</taxon>
        <taxon>Spirochaetia</taxon>
        <taxon>Spirochaetales</taxon>
        <taxon>Borreliaceae</taxon>
        <taxon>Borrelia</taxon>
    </lineage>
</organism>
<comment type="function">
    <text evidence="1">Plays an essential role in the initiation and regulation of chromosomal replication. ATP-DnaA binds to the origin of replication (oriC) to initiate formation of the DNA replication initiation complex once per cell cycle. Binds the DnaA box (a 9 base pair repeat at the origin) and separates the double-stranded (ds)DNA. Forms a right-handed helical filament on oriC DNA; dsDNA binds to the exterior of the filament while single-stranded (ss)DNA is stabiized in the filament's interior. The ATP-DnaA-oriC complex binds and stabilizes one strand of the AT-rich DNA unwinding element (DUE), permitting loading of DNA polymerase. After initiation quickly degrades to an ADP-DnaA complex that is not apt for DNA replication. Binds acidic phospholipids.</text>
</comment>
<comment type="subunit">
    <text evidence="1">Oligomerizes as a right-handed, spiral filament on DNA at oriC.</text>
</comment>
<comment type="subcellular location">
    <subcellularLocation>
        <location evidence="1">Cytoplasm</location>
    </subcellularLocation>
</comment>
<comment type="domain">
    <text evidence="1">Domain I is involved in oligomerization and binding regulators, domain II is flexibile and of varying length in different bacteria, domain III forms the AAA+ region, while domain IV binds dsDNA.</text>
</comment>
<comment type="similarity">
    <text evidence="1">Belongs to the DnaA family.</text>
</comment>
<gene>
    <name evidence="1" type="primary">dnaA</name>
    <name type="ordered locus">BH0437</name>
</gene>
<accession>B2S0D9</accession>
<feature type="chain" id="PRO_1000121952" description="Chromosomal replication initiator protein DnaA">
    <location>
        <begin position="1"/>
        <end position="484"/>
    </location>
</feature>
<feature type="region of interest" description="Domain I, interacts with DnaA modulators" evidence="1">
    <location>
        <begin position="1"/>
        <end position="73"/>
    </location>
</feature>
<feature type="region of interest" description="Domain II" evidence="1">
    <location>
        <begin position="73"/>
        <end position="140"/>
    </location>
</feature>
<feature type="region of interest" description="Domain III, AAA+ region" evidence="1">
    <location>
        <begin position="141"/>
        <end position="357"/>
    </location>
</feature>
<feature type="region of interest" description="Domain IV, binds dsDNA" evidence="1">
    <location>
        <begin position="358"/>
        <end position="484"/>
    </location>
</feature>
<feature type="binding site" evidence="1">
    <location>
        <position position="185"/>
    </location>
    <ligand>
        <name>ATP</name>
        <dbReference type="ChEBI" id="CHEBI:30616"/>
    </ligand>
</feature>
<feature type="binding site" evidence="1">
    <location>
        <position position="187"/>
    </location>
    <ligand>
        <name>ATP</name>
        <dbReference type="ChEBI" id="CHEBI:30616"/>
    </ligand>
</feature>
<feature type="binding site" evidence="1">
    <location>
        <position position="188"/>
    </location>
    <ligand>
        <name>ATP</name>
        <dbReference type="ChEBI" id="CHEBI:30616"/>
    </ligand>
</feature>
<feature type="binding site" evidence="1">
    <location>
        <position position="189"/>
    </location>
    <ligand>
        <name>ATP</name>
        <dbReference type="ChEBI" id="CHEBI:30616"/>
    </ligand>
</feature>
<evidence type="ECO:0000255" key="1">
    <source>
        <dbReference type="HAMAP-Rule" id="MF_00377"/>
    </source>
</evidence>
<sequence length="484" mass="56364">MQEGKNIWSLILAAIRKELSEEEFYIWFENLYFIDATDENIKISAPNSFHKNQVEKRFAKRIKEILIEKGHNTINVEFINSPNDSKTHNMESKNISLKDISTQQDSPEKRTTFKIHTKNIIESTKQYTTKEEIHTKYRNPFLKKKYTFENFITGPNNKLAYNASLSIAKNPGKKYNPCLIYGGVGLGKTHLLQSIGNKTEELHKEFKILYVTAENFLNEFVESIKTNETKRFKKKYRYLDMLLLDDIHDLQKKEGIQEELFHTFNALYEDNKQMVFTCDRQPSELINFTDRLKSRFTRGLNVDISKPNFELRVAIIEKKAEEDGIKVPKSILNLVAKKVTTNIRDLEAAVTKLKAHIDLEDIEIDTSTVDKIIKEIIVYENDNTNTHNKINIESIKKVILRELKLTNKDIEGNSKKPEITKARHIYAYLLRNFTELSTIEIGKIIGGKTHSTVLYSINKIDKERNNDLEINNLIIELMNKINKK</sequence>